<feature type="peptide" id="PRO_0000042683" description="Conotoxin de13a">
    <location>
        <begin position="1"/>
        <end position="32"/>
    </location>
</feature>
<feature type="modified residue" description="4-hydroxyproline" evidence="1">
    <location>
        <position position="3"/>
    </location>
</feature>
<feature type="modified residue" description="4-hydroxyproline" evidence="1">
    <location>
        <position position="7"/>
    </location>
</feature>
<feature type="modified residue" description="6'-bromotryptophan" evidence="1">
    <location>
        <position position="14"/>
    </location>
</feature>
<feature type="modified residue" description="5-hydroxylysine" evidence="1">
    <location>
        <position position="18"/>
    </location>
</feature>
<feature type="modified residue" description="4-hydroxyproline" evidence="1">
    <location>
        <position position="21"/>
    </location>
</feature>
<feature type="modified residue" description="5-hydroxylysine" evidence="1">
    <location>
        <position position="25"/>
    </location>
</feature>
<feature type="modified residue" description="Histidine amide" evidence="1">
    <location>
        <position position="32"/>
    </location>
</feature>
<feature type="sequence conflict" description="In Ref. 1; AA sequence." evidence="2" ref="1">
    <original>R</original>
    <variation>S</variation>
    <location>
        <position position="5"/>
    </location>
</feature>
<accession>P84698</accession>
<evidence type="ECO:0000269" key="1">
    <source>
    </source>
</evidence>
<evidence type="ECO:0000305" key="2"/>
<comment type="subcellular location">
    <subcellularLocation>
        <location evidence="1">Secreted</location>
    </subcellularLocation>
</comment>
<comment type="tissue specificity">
    <text evidence="1">Expressed by the venom duct.</text>
</comment>
<comment type="domain">
    <text>The cysteine framework is XIII (C-C-C-CC-C-C-C).</text>
</comment>
<comment type="PTM">
    <text>Contains 4 disulfide bonds.</text>
</comment>
<comment type="PTM">
    <text>The diastereomeric form of 5-hydroxylysine found was not conclusively established, but it is probably 5R.</text>
</comment>
<comment type="mass spectrometry" mass="3486.76" method="MALDI" evidence="1"/>
<comment type="similarity">
    <text evidence="2">Belongs to the conotoxin G superfamily.</text>
</comment>
<keyword id="KW-0027">Amidation</keyword>
<keyword id="KW-0102">Bromination</keyword>
<keyword id="KW-0903">Direct protein sequencing</keyword>
<keyword id="KW-1015">Disulfide bond</keyword>
<keyword id="KW-0379">Hydroxylation</keyword>
<keyword id="KW-0964">Secreted</keyword>
<keyword id="KW-0800">Toxin</keyword>
<proteinExistence type="evidence at protein level"/>
<protein>
    <recommendedName>
        <fullName>Conotoxin de13a</fullName>
    </recommendedName>
</protein>
<organism>
    <name type="scientific">Conasprella delessertii</name>
    <name type="common">Sozon's cone</name>
    <name type="synonym">Conus delessertii</name>
    <dbReference type="NCBI Taxonomy" id="2547900"/>
    <lineage>
        <taxon>Eukaryota</taxon>
        <taxon>Metazoa</taxon>
        <taxon>Spiralia</taxon>
        <taxon>Lophotrochozoa</taxon>
        <taxon>Mollusca</taxon>
        <taxon>Gastropoda</taxon>
        <taxon>Caenogastropoda</taxon>
        <taxon>Neogastropoda</taxon>
        <taxon>Conoidea</taxon>
        <taxon>Conidae</taxon>
        <taxon>Conasprella</taxon>
        <taxon>Kohniconus</taxon>
    </lineage>
</organism>
<dbReference type="ConoServer" id="1500">
    <property type="toxin name" value="De13a precursor"/>
</dbReference>
<dbReference type="GO" id="GO:0005576">
    <property type="term" value="C:extracellular region"/>
    <property type="evidence" value="ECO:0007669"/>
    <property type="project" value="UniProtKB-SubCell"/>
</dbReference>
<dbReference type="GO" id="GO:0090729">
    <property type="term" value="F:toxin activity"/>
    <property type="evidence" value="ECO:0007669"/>
    <property type="project" value="UniProtKB-KW"/>
</dbReference>
<reference evidence="2" key="1">
    <citation type="journal article" date="2005" name="Biochemistry">
        <title>A novel conotoxin from Conus delessertii with posttranslationally modified lysine residues.</title>
        <authorList>
            <person name="Aguilar M.B."/>
            <person name="Lopez-Vera E."/>
            <person name="Ortiz E."/>
            <person name="Becerril B."/>
            <person name="Possani L.D."/>
            <person name="Olivera B.M."/>
            <person name="Heimer de la Cotera E.P."/>
        </authorList>
    </citation>
    <scope>NUCLEOTIDE SEQUENCE [MRNA]</scope>
    <scope>PROTEIN SEQUENCE OF 1-32</scope>
    <scope>SUBCELLULAR LOCATION</scope>
    <scope>TISSUE SPECIFICITY</scope>
    <scope>MASS SPECTROMETRY</scope>
    <scope>HYDROXYLATION AT PRO-3; PRO-7; LYS-18; PRO-21 AND LYS-25</scope>
    <scope>BROMINATION AT TRP-14</scope>
    <scope>AMIDATION AT HIS-32</scope>
    <source>
        <tissue evidence="1">Venom</tissue>
    </source>
</reference>
<name>CDA_CONDE</name>
<sequence length="34" mass="3595">DCPTRCPTTCANGWECCKGYPCVNKACSGCTHGK</sequence>